<feature type="peptide" id="PRO_0000345055" description="Phenol-soluble modulin alpha 2 peptide">
    <location>
        <begin position="1"/>
        <end position="21"/>
    </location>
</feature>
<dbReference type="EMBL" id="CP000730">
    <property type="protein sequence ID" value="ABX28481.1"/>
    <property type="molecule type" value="Genomic_DNA"/>
</dbReference>
<dbReference type="KEGG" id="sax:USA300HOU_0455"/>
<dbReference type="HOGENOM" id="CLU_222042_0_0_9"/>
<dbReference type="GO" id="GO:0031640">
    <property type="term" value="P:killing of cells of another organism"/>
    <property type="evidence" value="ECO:0007669"/>
    <property type="project" value="UniProtKB-KW"/>
</dbReference>
<dbReference type="InterPro" id="IPR031429">
    <property type="entry name" value="PSM_alpha"/>
</dbReference>
<dbReference type="NCBIfam" id="NF033425">
    <property type="entry name" value="PSM_alpha_1_2"/>
    <property type="match status" value="1"/>
</dbReference>
<dbReference type="Pfam" id="PF17063">
    <property type="entry name" value="PSMalpha"/>
    <property type="match status" value="1"/>
</dbReference>
<organism>
    <name type="scientific">Staphylococcus aureus (strain USA300 / TCH1516)</name>
    <dbReference type="NCBI Taxonomy" id="451516"/>
    <lineage>
        <taxon>Bacteria</taxon>
        <taxon>Bacillati</taxon>
        <taxon>Bacillota</taxon>
        <taxon>Bacilli</taxon>
        <taxon>Bacillales</taxon>
        <taxon>Staphylococcaceae</taxon>
        <taxon>Staphylococcus</taxon>
    </lineage>
</organism>
<sequence>MGIIAGIIKFIKGLIEKFTGK</sequence>
<protein>
    <recommendedName>
        <fullName>Phenol-soluble modulin alpha 2 peptide</fullName>
    </recommendedName>
</protein>
<comment type="function">
    <text evidence="1">Peptide which can recruit, activate and subsequently lyse human neutrophils, thus eliminating the main cellular defense against infection.</text>
</comment>
<comment type="similarity">
    <text evidence="2">Belongs to the phenol-soluble modulin alpha peptides family.</text>
</comment>
<reference key="1">
    <citation type="journal article" date="2007" name="BMC Microbiol.">
        <title>Subtle genetic changes enhance virulence of methicillin resistant and sensitive Staphylococcus aureus.</title>
        <authorList>
            <person name="Highlander S.K."/>
            <person name="Hulten K.G."/>
            <person name="Qin X."/>
            <person name="Jiang H."/>
            <person name="Yerrapragada S."/>
            <person name="Mason E.O. Jr."/>
            <person name="Shang Y."/>
            <person name="Williams T.M."/>
            <person name="Fortunov R.M."/>
            <person name="Liu Y."/>
            <person name="Igboeli O."/>
            <person name="Petrosino J."/>
            <person name="Tirumalai M."/>
            <person name="Uzman A."/>
            <person name="Fox G.E."/>
            <person name="Cardenas A.M."/>
            <person name="Muzny D.M."/>
            <person name="Hemphill L."/>
            <person name="Ding Y."/>
            <person name="Dugan S."/>
            <person name="Blyth P.R."/>
            <person name="Buhay C.J."/>
            <person name="Dinh H.H."/>
            <person name="Hawes A.C."/>
            <person name="Holder M."/>
            <person name="Kovar C.L."/>
            <person name="Lee S.L."/>
            <person name="Liu W."/>
            <person name="Nazareth L.V."/>
            <person name="Wang Q."/>
            <person name="Zhou J."/>
            <person name="Kaplan S.L."/>
            <person name="Weinstock G.M."/>
        </authorList>
    </citation>
    <scope>NUCLEOTIDE SEQUENCE [LARGE SCALE GENOMIC DNA]</scope>
    <source>
        <strain>USA300 / TCH1516</strain>
    </source>
</reference>
<keyword id="KW-0204">Cytolysis</keyword>
<keyword id="KW-0843">Virulence</keyword>
<proteinExistence type="inferred from homology"/>
<gene>
    <name type="primary">psmA2</name>
    <name type="ordered locus">USA300HOU_0455</name>
</gene>
<name>PSMA2_STAAT</name>
<accession>A8Z0V0</accession>
<evidence type="ECO:0000250" key="1">
    <source>
        <dbReference type="UniProtKB" id="A9JX06"/>
    </source>
</evidence>
<evidence type="ECO:0000305" key="2"/>